<sequence length="357" mass="38792">MNSFGKRLIMTTFGESHGKAIGCVLDGVPAGLDIDETFIQNELDRRRPGKSKFATARKELDEVQILSGVFEGRSTGTPIAMVIFNKDQKSRDYSNIKDIFRPGHADFTYWHKYGIRDYRGGGRSSARETAARVAAGAVAKLLLKEFGIEVEAGVCEVAGIEAKEFDFDYAKTSEIFALDPYVETLQKEAILKAKEAHDSVGGAVLVRATNLPVGLGEPIYYKLDAVLAEALMSINAAKAVDIGLGREASRLYGSQNNDQITKEGFISNNAGGILGGISNGEDVIAKVWFKPTPSIFQKQRSIDVNGNEVEVELKGRHDPFVAARGSVVAEAMMALVIADMLLLNATSQLSHLKKVYL</sequence>
<gene>
    <name evidence="1" type="primary">aroC</name>
    <name type="ordered locus">NIS_0216</name>
</gene>
<accession>A6Q1H1</accession>
<name>AROC_NITSB</name>
<proteinExistence type="inferred from homology"/>
<reference key="1">
    <citation type="journal article" date="2007" name="Proc. Natl. Acad. Sci. U.S.A.">
        <title>Deep-sea vent epsilon-proteobacterial genomes provide insights into emergence of pathogens.</title>
        <authorList>
            <person name="Nakagawa S."/>
            <person name="Takaki Y."/>
            <person name="Shimamura S."/>
            <person name="Reysenbach A.-L."/>
            <person name="Takai K."/>
            <person name="Horikoshi K."/>
        </authorList>
    </citation>
    <scope>NUCLEOTIDE SEQUENCE [LARGE SCALE GENOMIC DNA]</scope>
    <source>
        <strain>SB155-2</strain>
    </source>
</reference>
<comment type="function">
    <text evidence="1">Catalyzes the anti-1,4-elimination of the C-3 phosphate and the C-6 proR hydrogen from 5-enolpyruvylshikimate-3-phosphate (EPSP) to yield chorismate, which is the branch point compound that serves as the starting substrate for the three terminal pathways of aromatic amino acid biosynthesis. This reaction introduces a second double bond into the aromatic ring system.</text>
</comment>
<comment type="catalytic activity">
    <reaction evidence="1">
        <text>5-O-(1-carboxyvinyl)-3-phosphoshikimate = chorismate + phosphate</text>
        <dbReference type="Rhea" id="RHEA:21020"/>
        <dbReference type="ChEBI" id="CHEBI:29748"/>
        <dbReference type="ChEBI" id="CHEBI:43474"/>
        <dbReference type="ChEBI" id="CHEBI:57701"/>
        <dbReference type="EC" id="4.2.3.5"/>
    </reaction>
</comment>
<comment type="cofactor">
    <cofactor evidence="1">
        <name>FMNH2</name>
        <dbReference type="ChEBI" id="CHEBI:57618"/>
    </cofactor>
    <text evidence="1">Reduced FMN (FMNH(2)).</text>
</comment>
<comment type="pathway">
    <text evidence="1">Metabolic intermediate biosynthesis; chorismate biosynthesis; chorismate from D-erythrose 4-phosphate and phosphoenolpyruvate: step 7/7.</text>
</comment>
<comment type="subunit">
    <text evidence="1">Homotetramer.</text>
</comment>
<comment type="similarity">
    <text evidence="1">Belongs to the chorismate synthase family.</text>
</comment>
<keyword id="KW-0028">Amino-acid biosynthesis</keyword>
<keyword id="KW-0057">Aromatic amino acid biosynthesis</keyword>
<keyword id="KW-0274">FAD</keyword>
<keyword id="KW-0285">Flavoprotein</keyword>
<keyword id="KW-0288">FMN</keyword>
<keyword id="KW-0456">Lyase</keyword>
<keyword id="KW-0521">NADP</keyword>
<keyword id="KW-1185">Reference proteome</keyword>
<evidence type="ECO:0000255" key="1">
    <source>
        <dbReference type="HAMAP-Rule" id="MF_00300"/>
    </source>
</evidence>
<dbReference type="EC" id="4.2.3.5" evidence="1"/>
<dbReference type="EMBL" id="AP009178">
    <property type="protein sequence ID" value="BAF69330.1"/>
    <property type="molecule type" value="Genomic_DNA"/>
</dbReference>
<dbReference type="RefSeq" id="WP_012081593.1">
    <property type="nucleotide sequence ID" value="NC_009662.1"/>
</dbReference>
<dbReference type="SMR" id="A6Q1H1"/>
<dbReference type="FunCoup" id="A6Q1H1">
    <property type="interactions" value="412"/>
</dbReference>
<dbReference type="STRING" id="387092.NIS_0216"/>
<dbReference type="KEGG" id="nis:NIS_0216"/>
<dbReference type="eggNOG" id="COG0082">
    <property type="taxonomic scope" value="Bacteria"/>
</dbReference>
<dbReference type="HOGENOM" id="CLU_034547_0_2_7"/>
<dbReference type="InParanoid" id="A6Q1H1"/>
<dbReference type="OrthoDB" id="9771806at2"/>
<dbReference type="UniPathway" id="UPA00053">
    <property type="reaction ID" value="UER00090"/>
</dbReference>
<dbReference type="Proteomes" id="UP000001118">
    <property type="component" value="Chromosome"/>
</dbReference>
<dbReference type="GO" id="GO:0005829">
    <property type="term" value="C:cytosol"/>
    <property type="evidence" value="ECO:0007669"/>
    <property type="project" value="TreeGrafter"/>
</dbReference>
<dbReference type="GO" id="GO:0004107">
    <property type="term" value="F:chorismate synthase activity"/>
    <property type="evidence" value="ECO:0007669"/>
    <property type="project" value="UniProtKB-UniRule"/>
</dbReference>
<dbReference type="GO" id="GO:0010181">
    <property type="term" value="F:FMN binding"/>
    <property type="evidence" value="ECO:0007669"/>
    <property type="project" value="TreeGrafter"/>
</dbReference>
<dbReference type="GO" id="GO:0008652">
    <property type="term" value="P:amino acid biosynthetic process"/>
    <property type="evidence" value="ECO:0007669"/>
    <property type="project" value="UniProtKB-KW"/>
</dbReference>
<dbReference type="GO" id="GO:0009073">
    <property type="term" value="P:aromatic amino acid family biosynthetic process"/>
    <property type="evidence" value="ECO:0007669"/>
    <property type="project" value="UniProtKB-KW"/>
</dbReference>
<dbReference type="GO" id="GO:0009423">
    <property type="term" value="P:chorismate biosynthetic process"/>
    <property type="evidence" value="ECO:0007669"/>
    <property type="project" value="UniProtKB-UniRule"/>
</dbReference>
<dbReference type="CDD" id="cd07304">
    <property type="entry name" value="Chorismate_synthase"/>
    <property type="match status" value="1"/>
</dbReference>
<dbReference type="Gene3D" id="3.60.150.10">
    <property type="entry name" value="Chorismate synthase AroC"/>
    <property type="match status" value="1"/>
</dbReference>
<dbReference type="HAMAP" id="MF_00300">
    <property type="entry name" value="Chorismate_synth"/>
    <property type="match status" value="1"/>
</dbReference>
<dbReference type="InterPro" id="IPR000453">
    <property type="entry name" value="Chorismate_synth"/>
</dbReference>
<dbReference type="InterPro" id="IPR035904">
    <property type="entry name" value="Chorismate_synth_AroC_sf"/>
</dbReference>
<dbReference type="InterPro" id="IPR020541">
    <property type="entry name" value="Chorismate_synthase_CS"/>
</dbReference>
<dbReference type="NCBIfam" id="TIGR00033">
    <property type="entry name" value="aroC"/>
    <property type="match status" value="1"/>
</dbReference>
<dbReference type="NCBIfam" id="NF003793">
    <property type="entry name" value="PRK05382.1"/>
    <property type="match status" value="1"/>
</dbReference>
<dbReference type="PANTHER" id="PTHR21085">
    <property type="entry name" value="CHORISMATE SYNTHASE"/>
    <property type="match status" value="1"/>
</dbReference>
<dbReference type="PANTHER" id="PTHR21085:SF0">
    <property type="entry name" value="CHORISMATE SYNTHASE"/>
    <property type="match status" value="1"/>
</dbReference>
<dbReference type="Pfam" id="PF01264">
    <property type="entry name" value="Chorismate_synt"/>
    <property type="match status" value="1"/>
</dbReference>
<dbReference type="PIRSF" id="PIRSF001456">
    <property type="entry name" value="Chorismate_synth"/>
    <property type="match status" value="1"/>
</dbReference>
<dbReference type="SUPFAM" id="SSF103263">
    <property type="entry name" value="Chorismate synthase, AroC"/>
    <property type="match status" value="1"/>
</dbReference>
<dbReference type="PROSITE" id="PS00787">
    <property type="entry name" value="CHORISMATE_SYNTHASE_1"/>
    <property type="match status" value="1"/>
</dbReference>
<dbReference type="PROSITE" id="PS00788">
    <property type="entry name" value="CHORISMATE_SYNTHASE_2"/>
    <property type="match status" value="1"/>
</dbReference>
<organism>
    <name type="scientific">Nitratiruptor sp. (strain SB155-2)</name>
    <dbReference type="NCBI Taxonomy" id="387092"/>
    <lineage>
        <taxon>Bacteria</taxon>
        <taxon>Pseudomonadati</taxon>
        <taxon>Campylobacterota</taxon>
        <taxon>Epsilonproteobacteria</taxon>
        <taxon>Nautiliales</taxon>
        <taxon>Nitratiruptoraceae</taxon>
        <taxon>Nitratiruptor</taxon>
    </lineage>
</organism>
<feature type="chain" id="PRO_1000022518" description="Chorismate synthase">
    <location>
        <begin position="1"/>
        <end position="357"/>
    </location>
</feature>
<feature type="binding site" evidence="1">
    <location>
        <position position="46"/>
    </location>
    <ligand>
        <name>NADP(+)</name>
        <dbReference type="ChEBI" id="CHEBI:58349"/>
    </ligand>
</feature>
<feature type="binding site" evidence="1">
    <location>
        <begin position="123"/>
        <end position="125"/>
    </location>
    <ligand>
        <name>FMN</name>
        <dbReference type="ChEBI" id="CHEBI:58210"/>
    </ligand>
</feature>
<feature type="binding site" evidence="1">
    <location>
        <begin position="235"/>
        <end position="236"/>
    </location>
    <ligand>
        <name>FMN</name>
        <dbReference type="ChEBI" id="CHEBI:58210"/>
    </ligand>
</feature>
<feature type="binding site" evidence="1">
    <location>
        <position position="275"/>
    </location>
    <ligand>
        <name>FMN</name>
        <dbReference type="ChEBI" id="CHEBI:58210"/>
    </ligand>
</feature>
<feature type="binding site" evidence="1">
    <location>
        <begin position="290"/>
        <end position="294"/>
    </location>
    <ligand>
        <name>FMN</name>
        <dbReference type="ChEBI" id="CHEBI:58210"/>
    </ligand>
</feature>
<feature type="binding site" evidence="1">
    <location>
        <position position="316"/>
    </location>
    <ligand>
        <name>FMN</name>
        <dbReference type="ChEBI" id="CHEBI:58210"/>
    </ligand>
</feature>
<protein>
    <recommendedName>
        <fullName evidence="1">Chorismate synthase</fullName>
        <shortName evidence="1">CS</shortName>
        <ecNumber evidence="1">4.2.3.5</ecNumber>
    </recommendedName>
    <alternativeName>
        <fullName evidence="1">5-enolpyruvylshikimate-3-phosphate phospholyase</fullName>
    </alternativeName>
</protein>